<accession>Q6BQK9</accession>
<sequence length="1544" mass="173122">MSTIEIVSTVAEYTEIHSPVSSKFLLPSARDSSSSISLFSAIFWFWSWLFFKIMNIFLYYIPNIIVNLFSVNFQITLSLSSIVITLTGIISFCFLIVRYKYLTRYSKTTKSTDKPKSSNKNIDLVGSIKKNKRGDSKSTSNYLDEFLSAIKVFGYLERPVFHELTRNMTTQKLSSEEILYLDEKLGFSIVVEGTIQVYTKVNSVNSSTTSNSDDNELNFEKDDLLTIGDQCYQLLNEVKSGSPLSSLMSTLDLFKPVDPDTMSNRLFSPFELDSNPASNPLSPDNTGSKSFDPLSSGNFNDTSLSSSDRNYPNIVARPKPIEDSNNLNTATIAIIPYSAFQKVQSKYPKATSHIVTMVITRLYKITMNTIHSYLGLTREIIRSEIQLNESEGAKDSLPSYLYDGVIEKFYGDKNNETLLNKTAESPSVSINKTSSSSSSLPKKSTTSLRPLNRNQSSRYVVLDSRSKSTHPGDLLSSVPLSRRSDYYQTHTTIQPDPEEVRSQSRTKMTSPVLPKRQISSNGGPTLKGHSSSTTKFENIRDRTFSDEREETEETSLRIAIIENIFKILGINEVSNMIGSMSDLNSRSSSVNSSVVGLPSLMNNGNESKYPNGIFDFNTGKVRYDSISSFPTSLNKGANNNLKFYDTVNQSQLKDMDHENDKSSQVDINNLMFKRKSIPIQSFESNFYDVKNEFSKHLNIKYFGPNTTLVEQESFNSGLYYVIDGTLDVFYKPASKESENLTPMNKKKLYTVKSGGLAGYLSSIIGVRSLVSISTPGDKGVIVAHIPKNEFSKLLDKFYFLQLPVASKLKSLLSSQILTIDYALEWCHIPAGDVLCSQGDLANGFHIVLSGRFRVVRYNNNKSSEVNPDDNTDIHDYNNNLIDESLSYKSRKKKDDITILGEYGHGETIGEVEVLTASRRTNSLIAVRDSETARIPRTLFEMLSLRNPSIMVKVSRIVANKMAKKDNIGIPSTISSNVPLIVTNTDSHISNDYKTITILPTVSGLPVRDFADKLVSALKNIGRNVIALDQASTLTHLGRHAFDERLAQLKLSGYFAYLEEEYQTIVYVCDTPLKSNWTSTCISQGDCILLLADADDDDVATNIGEYERLLMKLKTTARTDLCLIHADKYVEPGSTSVWLKNRIWVQGHHHIQMEIARDNSVQQGQKTSIIKNIAAKISSRTNTNIKSRLENVKTKAILSLNKFNNRLSRRTHSYKTVQAHKNDFLRLARILSNESVGLVLGGGGSRGISHVGVVMALEKHGIPIDLIGGTSIGSFVGGLYAKDYNIVSIYGRAKRFAKRVSSWWRMVLDLTYPVTSYITGYEFNRGIWKIFGSSEIEDFWIRYFCNSTNITNSTMDIHESGFSWRFIRASMSLAGLLPPITYGGSMLLDGGYLDNLPVMEMKKKGAKYIIAVDVGSVDDRTPMNYGDTLSGFWVLFNRWNPFSRHPNVPNMMDIQLRLAYVASVNALELAKKTPGVIYLRPPIDDYATLDFAKFDEIYHVGMAYADNLLTRWEQTGKIPPIAGMIDRSRIRNGEERKSLYRRSSI</sequence>
<keyword id="KW-0256">Endoplasmic reticulum</keyword>
<keyword id="KW-0378">Hydrolase</keyword>
<keyword id="KW-0442">Lipid degradation</keyword>
<keyword id="KW-0443">Lipid metabolism</keyword>
<keyword id="KW-0472">Membrane</keyword>
<keyword id="KW-1185">Reference proteome</keyword>
<keyword id="KW-0677">Repeat</keyword>
<keyword id="KW-0812">Transmembrane</keyword>
<keyword id="KW-1133">Transmembrane helix</keyword>
<reference key="1">
    <citation type="journal article" date="2004" name="Nature">
        <title>Genome evolution in yeasts.</title>
        <authorList>
            <person name="Dujon B."/>
            <person name="Sherman D."/>
            <person name="Fischer G."/>
            <person name="Durrens P."/>
            <person name="Casaregola S."/>
            <person name="Lafontaine I."/>
            <person name="de Montigny J."/>
            <person name="Marck C."/>
            <person name="Neuveglise C."/>
            <person name="Talla E."/>
            <person name="Goffard N."/>
            <person name="Frangeul L."/>
            <person name="Aigle M."/>
            <person name="Anthouard V."/>
            <person name="Babour A."/>
            <person name="Barbe V."/>
            <person name="Barnay S."/>
            <person name="Blanchin S."/>
            <person name="Beckerich J.-M."/>
            <person name="Beyne E."/>
            <person name="Bleykasten C."/>
            <person name="Boisrame A."/>
            <person name="Boyer J."/>
            <person name="Cattolico L."/>
            <person name="Confanioleri F."/>
            <person name="de Daruvar A."/>
            <person name="Despons L."/>
            <person name="Fabre E."/>
            <person name="Fairhead C."/>
            <person name="Ferry-Dumazet H."/>
            <person name="Groppi A."/>
            <person name="Hantraye F."/>
            <person name="Hennequin C."/>
            <person name="Jauniaux N."/>
            <person name="Joyet P."/>
            <person name="Kachouri R."/>
            <person name="Kerrest A."/>
            <person name="Koszul R."/>
            <person name="Lemaire M."/>
            <person name="Lesur I."/>
            <person name="Ma L."/>
            <person name="Muller H."/>
            <person name="Nicaud J.-M."/>
            <person name="Nikolski M."/>
            <person name="Oztas S."/>
            <person name="Ozier-Kalogeropoulos O."/>
            <person name="Pellenz S."/>
            <person name="Potier S."/>
            <person name="Richard G.-F."/>
            <person name="Straub M.-L."/>
            <person name="Suleau A."/>
            <person name="Swennen D."/>
            <person name="Tekaia F."/>
            <person name="Wesolowski-Louvel M."/>
            <person name="Westhof E."/>
            <person name="Wirth B."/>
            <person name="Zeniou-Meyer M."/>
            <person name="Zivanovic Y."/>
            <person name="Bolotin-Fukuhara M."/>
            <person name="Thierry A."/>
            <person name="Bouchier C."/>
            <person name="Caudron B."/>
            <person name="Scarpelli C."/>
            <person name="Gaillardin C."/>
            <person name="Weissenbach J."/>
            <person name="Wincker P."/>
            <person name="Souciet J.-L."/>
        </authorList>
    </citation>
    <scope>NUCLEOTIDE SEQUENCE [LARGE SCALE GENOMIC DNA]</scope>
    <source>
        <strain>ATCC 36239 / CBS 767 / BCRC 21394 / JCM 1990 / NBRC 0083 / IGC 2968</strain>
    </source>
</reference>
<protein>
    <recommendedName>
        <fullName>Lysophospholipase NTE1</fullName>
        <ecNumber>3.1.1.5</ecNumber>
    </recommendedName>
    <alternativeName>
        <fullName>Intracellular phospholipase B</fullName>
    </alternativeName>
    <alternativeName>
        <fullName>Neuropathy target esterase homolog</fullName>
    </alternativeName>
</protein>
<dbReference type="EC" id="3.1.1.5"/>
<dbReference type="EMBL" id="CR382137">
    <property type="protein sequence ID" value="CAG87737.2"/>
    <property type="molecule type" value="Genomic_DNA"/>
</dbReference>
<dbReference type="RefSeq" id="XP_459511.2">
    <property type="nucleotide sequence ID" value="XM_459511.1"/>
</dbReference>
<dbReference type="SMR" id="Q6BQK9"/>
<dbReference type="FunCoup" id="Q6BQK9">
    <property type="interactions" value="122"/>
</dbReference>
<dbReference type="STRING" id="284592.Q6BQK9"/>
<dbReference type="GeneID" id="2902795"/>
<dbReference type="KEGG" id="dha:DEHA2E04400g"/>
<dbReference type="VEuPathDB" id="FungiDB:DEHA2E04400g"/>
<dbReference type="eggNOG" id="KOG2968">
    <property type="taxonomic scope" value="Eukaryota"/>
</dbReference>
<dbReference type="HOGENOM" id="CLU_000960_1_1_1"/>
<dbReference type="InParanoid" id="Q6BQK9"/>
<dbReference type="OMA" id="SSGYVWR"/>
<dbReference type="OrthoDB" id="421051at2759"/>
<dbReference type="Proteomes" id="UP000000599">
    <property type="component" value="Chromosome E"/>
</dbReference>
<dbReference type="GO" id="GO:0005789">
    <property type="term" value="C:endoplasmic reticulum membrane"/>
    <property type="evidence" value="ECO:0007669"/>
    <property type="project" value="UniProtKB-SubCell"/>
</dbReference>
<dbReference type="GO" id="GO:0004622">
    <property type="term" value="F:lysophospholipase activity"/>
    <property type="evidence" value="ECO:0007669"/>
    <property type="project" value="UniProtKB-EC"/>
</dbReference>
<dbReference type="GO" id="GO:0046486">
    <property type="term" value="P:glycerolipid metabolic process"/>
    <property type="evidence" value="ECO:0007669"/>
    <property type="project" value="UniProtKB-ARBA"/>
</dbReference>
<dbReference type="GO" id="GO:0016042">
    <property type="term" value="P:lipid catabolic process"/>
    <property type="evidence" value="ECO:0007669"/>
    <property type="project" value="UniProtKB-KW"/>
</dbReference>
<dbReference type="CDD" id="cd00038">
    <property type="entry name" value="CAP_ED"/>
    <property type="match status" value="1"/>
</dbReference>
<dbReference type="FunFam" id="3.40.1090.10:FF:000013">
    <property type="entry name" value="Lysophospholipase NTE1"/>
    <property type="match status" value="1"/>
</dbReference>
<dbReference type="Gene3D" id="3.40.1090.10">
    <property type="entry name" value="Cytosolic phospholipase A2 catalytic domain"/>
    <property type="match status" value="2"/>
</dbReference>
<dbReference type="Gene3D" id="2.60.120.10">
    <property type="entry name" value="Jelly Rolls"/>
    <property type="match status" value="2"/>
</dbReference>
<dbReference type="InterPro" id="IPR016035">
    <property type="entry name" value="Acyl_Trfase/lysoPLipase"/>
</dbReference>
<dbReference type="InterPro" id="IPR000595">
    <property type="entry name" value="cNMP-bd_dom"/>
</dbReference>
<dbReference type="InterPro" id="IPR018490">
    <property type="entry name" value="cNMP-bd_dom_sf"/>
</dbReference>
<dbReference type="InterPro" id="IPR050301">
    <property type="entry name" value="NTE"/>
</dbReference>
<dbReference type="InterPro" id="IPR056556">
    <property type="entry name" value="NTE1_P-loop_dom"/>
</dbReference>
<dbReference type="InterPro" id="IPR002641">
    <property type="entry name" value="PNPLA_dom"/>
</dbReference>
<dbReference type="InterPro" id="IPR014710">
    <property type="entry name" value="RmlC-like_jellyroll"/>
</dbReference>
<dbReference type="PANTHER" id="PTHR14226:SF29">
    <property type="entry name" value="NEUROPATHY TARGET ESTERASE SWS"/>
    <property type="match status" value="1"/>
</dbReference>
<dbReference type="PANTHER" id="PTHR14226">
    <property type="entry name" value="NEUROPATHY TARGET ESTERASE/SWISS CHEESE D.MELANOGASTER"/>
    <property type="match status" value="1"/>
</dbReference>
<dbReference type="Pfam" id="PF24179">
    <property type="entry name" value="NTE_Ploop"/>
    <property type="match status" value="1"/>
</dbReference>
<dbReference type="Pfam" id="PF01734">
    <property type="entry name" value="Patatin"/>
    <property type="match status" value="1"/>
</dbReference>
<dbReference type="SMART" id="SM00100">
    <property type="entry name" value="cNMP"/>
    <property type="match status" value="1"/>
</dbReference>
<dbReference type="SUPFAM" id="SSF51206">
    <property type="entry name" value="cAMP-binding domain-like"/>
    <property type="match status" value="2"/>
</dbReference>
<dbReference type="SUPFAM" id="SSF52151">
    <property type="entry name" value="FabD/lysophospholipase-like"/>
    <property type="match status" value="1"/>
</dbReference>
<dbReference type="PROSITE" id="PS50042">
    <property type="entry name" value="CNMP_BINDING_3"/>
    <property type="match status" value="2"/>
</dbReference>
<dbReference type="PROSITE" id="PS51635">
    <property type="entry name" value="PNPLA"/>
    <property type="match status" value="1"/>
</dbReference>
<gene>
    <name type="primary">NTE1</name>
    <name type="ordered locus">DEHA2E04400g</name>
</gene>
<name>NTE1_DEBHA</name>
<feature type="chain" id="PRO_0000295319" description="Lysophospholipase NTE1">
    <location>
        <begin position="1"/>
        <end position="1544"/>
    </location>
</feature>
<feature type="topological domain" description="Cytoplasmic" evidence="1">
    <location>
        <begin position="1"/>
        <end position="37"/>
    </location>
</feature>
<feature type="transmembrane region" description="Helical" evidence="2">
    <location>
        <begin position="38"/>
        <end position="58"/>
    </location>
</feature>
<feature type="topological domain" description="Lumenal" evidence="1">
    <location>
        <begin position="59"/>
        <end position="76"/>
    </location>
</feature>
<feature type="transmembrane region" description="Helical" evidence="2">
    <location>
        <begin position="77"/>
        <end position="97"/>
    </location>
</feature>
<feature type="topological domain" description="Cytoplasmic" evidence="1">
    <location>
        <begin position="98"/>
        <end position="1544"/>
    </location>
</feature>
<feature type="domain" description="PNPLA" evidence="3">
    <location>
        <begin position="1237"/>
        <end position="1401"/>
    </location>
</feature>
<feature type="region of interest" description="Disordered" evidence="4">
    <location>
        <begin position="265"/>
        <end position="312"/>
    </location>
</feature>
<feature type="region of interest" description="Disordered" evidence="4">
    <location>
        <begin position="424"/>
        <end position="552"/>
    </location>
</feature>
<feature type="short sequence motif" description="GXGXXG" evidence="3">
    <location>
        <begin position="1241"/>
        <end position="1246"/>
    </location>
</feature>
<feature type="short sequence motif" description="GXSXG" evidence="3">
    <location>
        <begin position="1268"/>
        <end position="1272"/>
    </location>
</feature>
<feature type="short sequence motif" description="DGA/G" evidence="3">
    <location>
        <begin position="1388"/>
        <end position="1390"/>
    </location>
</feature>
<feature type="compositionally biased region" description="Polar residues" evidence="4">
    <location>
        <begin position="275"/>
        <end position="310"/>
    </location>
</feature>
<feature type="compositionally biased region" description="Low complexity" evidence="4">
    <location>
        <begin position="425"/>
        <end position="447"/>
    </location>
</feature>
<feature type="compositionally biased region" description="Polar residues" evidence="4">
    <location>
        <begin position="448"/>
        <end position="458"/>
    </location>
</feature>
<feature type="compositionally biased region" description="Polar residues" evidence="4">
    <location>
        <begin position="517"/>
        <end position="536"/>
    </location>
</feature>
<feature type="compositionally biased region" description="Basic and acidic residues" evidence="4">
    <location>
        <begin position="537"/>
        <end position="546"/>
    </location>
</feature>
<feature type="active site" description="Nucleophile" evidence="3">
    <location>
        <position position="1270"/>
    </location>
</feature>
<feature type="active site" description="Proton acceptor" evidence="3">
    <location>
        <position position="1388"/>
    </location>
</feature>
<feature type="binding site">
    <location>
        <begin position="681"/>
        <end position="811"/>
    </location>
    <ligand>
        <name>a nucleoside 3',5'-cyclic phosphate</name>
        <dbReference type="ChEBI" id="CHEBI:58464"/>
        <label>1</label>
    </ligand>
</feature>
<feature type="binding site">
    <location>
        <begin position="807"/>
        <end position="960"/>
    </location>
    <ligand>
        <name>a nucleoside 3',5'-cyclic phosphate</name>
        <dbReference type="ChEBI" id="CHEBI:58464"/>
        <label>2</label>
    </ligand>
</feature>
<organism>
    <name type="scientific">Debaryomyces hansenii (strain ATCC 36239 / CBS 767 / BCRC 21394 / JCM 1990 / NBRC 0083 / IGC 2968)</name>
    <name type="common">Yeast</name>
    <name type="synonym">Torulaspora hansenii</name>
    <dbReference type="NCBI Taxonomy" id="284592"/>
    <lineage>
        <taxon>Eukaryota</taxon>
        <taxon>Fungi</taxon>
        <taxon>Dikarya</taxon>
        <taxon>Ascomycota</taxon>
        <taxon>Saccharomycotina</taxon>
        <taxon>Pichiomycetes</taxon>
        <taxon>Debaryomycetaceae</taxon>
        <taxon>Debaryomyces</taxon>
    </lineage>
</organism>
<proteinExistence type="inferred from homology"/>
<evidence type="ECO:0000250" key="1"/>
<evidence type="ECO:0000255" key="2"/>
<evidence type="ECO:0000255" key="3">
    <source>
        <dbReference type="PROSITE-ProRule" id="PRU01161"/>
    </source>
</evidence>
<evidence type="ECO:0000256" key="4">
    <source>
        <dbReference type="SAM" id="MobiDB-lite"/>
    </source>
</evidence>
<evidence type="ECO:0000305" key="5"/>
<comment type="function">
    <text evidence="1">Intracellular phospholipase B that catalyzes the double deacylation of phosphatidylcholine (PC) to glycerophosphocholine (GroPCho). Plays an important role in membrane lipid homeostasis. Responsible for the rapid PC turnover in response to inositol, elevated temperatures, or when choline is present in the growth medium (By similarity).</text>
</comment>
<comment type="catalytic activity">
    <reaction>
        <text>a 1-acyl-sn-glycero-3-phosphocholine + H2O = sn-glycerol 3-phosphocholine + a fatty acid + H(+)</text>
        <dbReference type="Rhea" id="RHEA:15177"/>
        <dbReference type="ChEBI" id="CHEBI:15377"/>
        <dbReference type="ChEBI" id="CHEBI:15378"/>
        <dbReference type="ChEBI" id="CHEBI:16870"/>
        <dbReference type="ChEBI" id="CHEBI:28868"/>
        <dbReference type="ChEBI" id="CHEBI:58168"/>
        <dbReference type="EC" id="3.1.1.5"/>
    </reaction>
</comment>
<comment type="activity regulation">
    <text evidence="1">Inhibited by organophosphorus esters.</text>
</comment>
<comment type="subcellular location">
    <subcellularLocation>
        <location evidence="1">Endoplasmic reticulum membrane</location>
        <topology evidence="1">Multi-pass membrane protein</topology>
    </subcellularLocation>
</comment>
<comment type="similarity">
    <text evidence="5">Belongs to the NTE family.</text>
</comment>